<keyword id="KW-0963">Cytoplasm</keyword>
<keyword id="KW-0227">DNA damage</keyword>
<keyword id="KW-0228">DNA excision</keyword>
<keyword id="KW-0234">DNA repair</keyword>
<keyword id="KW-0267">Excision nuclease</keyword>
<keyword id="KW-0742">SOS response</keyword>
<feature type="chain" id="PRO_1000204116" description="UvrABC system protein C">
    <location>
        <begin position="1"/>
        <end position="618"/>
    </location>
</feature>
<feature type="domain" description="GIY-YIG" evidence="1">
    <location>
        <begin position="13"/>
        <end position="92"/>
    </location>
</feature>
<feature type="domain" description="UVR" evidence="1">
    <location>
        <begin position="204"/>
        <end position="239"/>
    </location>
</feature>
<sequence>MFDLEYQLKNLPDKPGVYLMKNNLGEIIYVGKAKILKNRVRQYFQKSQKHSEKVKAMVKNIEEFEYIITDSEIEALILECNLIKKYRPKYNILLKDDKHYPFIKVTLAEDFPRVISTRKVTKDGSKYFGPYVDGSSVKDIIELIKKTFPIRTCKKNIVEGAKAIRPCLNYQIGLCKAPCAQYIKKSEYREIIDDVIKLLSGKHLDIVENFKLNMEKAAGNLEFEKAAMLRDKINIIEKIGEKQKIILNNFDNEDYISLYSDGKDTCFQVFFLRNGKIVGREHFIIEDTFDTNSSTLISNFLKEFYGGTAYIPKTIYVPNIEDEVLLEQWLTLKKESKSTIKIPIKGEKKNILDLVEKNAKTTLENFKLKYLQEKALYDNVLKDLKNILRLQEEPIRIEAFDISNIQGFDSVGSMVVFEKGRAKPSDYRRFKINTVKGADDYKSMKEILTRRFQHGLSEIKSIQDRKLEFSSGKFSVFPDLILMDGGKGQINIALEVLNTFNINIPVCGMVKDNKHRTRGLIYNGEEIIINKYGSVMKFITRVQDEVHRFAISYHRSLRGKNSFHSLLDDIPNIGEKRKKDLLFNFKSIDNIKKATYEELLSISSMDKKSAESILEFFK</sequence>
<gene>
    <name evidence="1" type="primary">uvrC</name>
    <name type="ordered locus">CLJ_B3683</name>
</gene>
<accession>C3KV13</accession>
<organism>
    <name type="scientific">Clostridium botulinum (strain 657 / Type Ba4)</name>
    <dbReference type="NCBI Taxonomy" id="515621"/>
    <lineage>
        <taxon>Bacteria</taxon>
        <taxon>Bacillati</taxon>
        <taxon>Bacillota</taxon>
        <taxon>Clostridia</taxon>
        <taxon>Eubacteriales</taxon>
        <taxon>Clostridiaceae</taxon>
        <taxon>Clostridium</taxon>
    </lineage>
</organism>
<evidence type="ECO:0000255" key="1">
    <source>
        <dbReference type="HAMAP-Rule" id="MF_00203"/>
    </source>
</evidence>
<dbReference type="EMBL" id="CP001083">
    <property type="protein sequence ID" value="ACQ53747.1"/>
    <property type="molecule type" value="Genomic_DNA"/>
</dbReference>
<dbReference type="RefSeq" id="WP_003360285.1">
    <property type="nucleotide sequence ID" value="NC_012658.1"/>
</dbReference>
<dbReference type="SMR" id="C3KV13"/>
<dbReference type="KEGG" id="cbi:CLJ_B3683"/>
<dbReference type="HOGENOM" id="CLU_014841_3_2_9"/>
<dbReference type="Proteomes" id="UP000002333">
    <property type="component" value="Chromosome"/>
</dbReference>
<dbReference type="GO" id="GO:0005737">
    <property type="term" value="C:cytoplasm"/>
    <property type="evidence" value="ECO:0007669"/>
    <property type="project" value="UniProtKB-SubCell"/>
</dbReference>
<dbReference type="GO" id="GO:0009380">
    <property type="term" value="C:excinuclease repair complex"/>
    <property type="evidence" value="ECO:0007669"/>
    <property type="project" value="InterPro"/>
</dbReference>
<dbReference type="GO" id="GO:0003677">
    <property type="term" value="F:DNA binding"/>
    <property type="evidence" value="ECO:0007669"/>
    <property type="project" value="UniProtKB-UniRule"/>
</dbReference>
<dbReference type="GO" id="GO:0009381">
    <property type="term" value="F:excinuclease ABC activity"/>
    <property type="evidence" value="ECO:0007669"/>
    <property type="project" value="UniProtKB-UniRule"/>
</dbReference>
<dbReference type="GO" id="GO:0006289">
    <property type="term" value="P:nucleotide-excision repair"/>
    <property type="evidence" value="ECO:0007669"/>
    <property type="project" value="UniProtKB-UniRule"/>
</dbReference>
<dbReference type="GO" id="GO:0009432">
    <property type="term" value="P:SOS response"/>
    <property type="evidence" value="ECO:0007669"/>
    <property type="project" value="UniProtKB-UniRule"/>
</dbReference>
<dbReference type="CDD" id="cd10434">
    <property type="entry name" value="GIY-YIG_UvrC_Cho"/>
    <property type="match status" value="1"/>
</dbReference>
<dbReference type="FunFam" id="3.40.1440.10:FF:000001">
    <property type="entry name" value="UvrABC system protein C"/>
    <property type="match status" value="1"/>
</dbReference>
<dbReference type="Gene3D" id="1.10.150.20">
    <property type="entry name" value="5' to 3' exonuclease, C-terminal subdomain"/>
    <property type="match status" value="1"/>
</dbReference>
<dbReference type="Gene3D" id="3.40.1440.10">
    <property type="entry name" value="GIY-YIG endonuclease"/>
    <property type="match status" value="1"/>
</dbReference>
<dbReference type="Gene3D" id="4.10.860.10">
    <property type="entry name" value="UVR domain"/>
    <property type="match status" value="1"/>
</dbReference>
<dbReference type="Gene3D" id="3.30.420.340">
    <property type="entry name" value="UvrC, RNAse H endonuclease domain"/>
    <property type="match status" value="1"/>
</dbReference>
<dbReference type="HAMAP" id="MF_00203">
    <property type="entry name" value="UvrC"/>
    <property type="match status" value="1"/>
</dbReference>
<dbReference type="InterPro" id="IPR041663">
    <property type="entry name" value="DisA/LigA_HHH"/>
</dbReference>
<dbReference type="InterPro" id="IPR000305">
    <property type="entry name" value="GIY-YIG_endonuc"/>
</dbReference>
<dbReference type="InterPro" id="IPR035901">
    <property type="entry name" value="GIY-YIG_endonuc_sf"/>
</dbReference>
<dbReference type="InterPro" id="IPR047296">
    <property type="entry name" value="GIY-YIG_UvrC_Cho"/>
</dbReference>
<dbReference type="InterPro" id="IPR010994">
    <property type="entry name" value="RuvA_2-like"/>
</dbReference>
<dbReference type="InterPro" id="IPR001943">
    <property type="entry name" value="UVR_dom"/>
</dbReference>
<dbReference type="InterPro" id="IPR036876">
    <property type="entry name" value="UVR_dom_sf"/>
</dbReference>
<dbReference type="InterPro" id="IPR050066">
    <property type="entry name" value="UvrABC_protein_C"/>
</dbReference>
<dbReference type="InterPro" id="IPR004791">
    <property type="entry name" value="UvrC"/>
</dbReference>
<dbReference type="InterPro" id="IPR001162">
    <property type="entry name" value="UvrC_RNase_H_dom"/>
</dbReference>
<dbReference type="InterPro" id="IPR038476">
    <property type="entry name" value="UvrC_RNase_H_dom_sf"/>
</dbReference>
<dbReference type="NCBIfam" id="NF001824">
    <property type="entry name" value="PRK00558.1-5"/>
    <property type="match status" value="1"/>
</dbReference>
<dbReference type="NCBIfam" id="TIGR00194">
    <property type="entry name" value="uvrC"/>
    <property type="match status" value="1"/>
</dbReference>
<dbReference type="PANTHER" id="PTHR30562:SF1">
    <property type="entry name" value="UVRABC SYSTEM PROTEIN C"/>
    <property type="match status" value="1"/>
</dbReference>
<dbReference type="PANTHER" id="PTHR30562">
    <property type="entry name" value="UVRC/OXIDOREDUCTASE"/>
    <property type="match status" value="1"/>
</dbReference>
<dbReference type="Pfam" id="PF01541">
    <property type="entry name" value="GIY-YIG"/>
    <property type="match status" value="1"/>
</dbReference>
<dbReference type="Pfam" id="PF12826">
    <property type="entry name" value="HHH_2"/>
    <property type="match status" value="1"/>
</dbReference>
<dbReference type="Pfam" id="PF22920">
    <property type="entry name" value="UvrC_RNaseH"/>
    <property type="match status" value="1"/>
</dbReference>
<dbReference type="Pfam" id="PF08459">
    <property type="entry name" value="UvrC_RNaseH_dom"/>
    <property type="match status" value="1"/>
</dbReference>
<dbReference type="SMART" id="SM00465">
    <property type="entry name" value="GIYc"/>
    <property type="match status" value="1"/>
</dbReference>
<dbReference type="SUPFAM" id="SSF46600">
    <property type="entry name" value="C-terminal UvrC-binding domain of UvrB"/>
    <property type="match status" value="1"/>
</dbReference>
<dbReference type="SUPFAM" id="SSF82771">
    <property type="entry name" value="GIY-YIG endonuclease"/>
    <property type="match status" value="1"/>
</dbReference>
<dbReference type="SUPFAM" id="SSF47781">
    <property type="entry name" value="RuvA domain 2-like"/>
    <property type="match status" value="1"/>
</dbReference>
<dbReference type="PROSITE" id="PS50164">
    <property type="entry name" value="GIY_YIG"/>
    <property type="match status" value="1"/>
</dbReference>
<dbReference type="PROSITE" id="PS50151">
    <property type="entry name" value="UVR"/>
    <property type="match status" value="1"/>
</dbReference>
<dbReference type="PROSITE" id="PS50165">
    <property type="entry name" value="UVRC"/>
    <property type="match status" value="1"/>
</dbReference>
<name>UVRC_CLOB6</name>
<protein>
    <recommendedName>
        <fullName evidence="1">UvrABC system protein C</fullName>
        <shortName evidence="1">Protein UvrC</shortName>
    </recommendedName>
    <alternativeName>
        <fullName evidence="1">Excinuclease ABC subunit C</fullName>
    </alternativeName>
</protein>
<reference key="1">
    <citation type="submission" date="2008-05" db="EMBL/GenBank/DDBJ databases">
        <title>Genome sequence of Clostridium botulinum Ba4 strain 657.</title>
        <authorList>
            <person name="Shrivastava S."/>
            <person name="Brown J.L."/>
            <person name="Bruce D."/>
            <person name="Detter C."/>
            <person name="Munk C."/>
            <person name="Smith L.A."/>
            <person name="Smith T.J."/>
            <person name="Sutton G."/>
            <person name="Brettin T.S."/>
        </authorList>
    </citation>
    <scope>NUCLEOTIDE SEQUENCE [LARGE SCALE GENOMIC DNA]</scope>
    <source>
        <strain>657 / Type Ba4</strain>
    </source>
</reference>
<proteinExistence type="inferred from homology"/>
<comment type="function">
    <text evidence="1">The UvrABC repair system catalyzes the recognition and processing of DNA lesions. UvrC both incises the 5' and 3' sides of the lesion. The N-terminal half is responsible for the 3' incision and the C-terminal half is responsible for the 5' incision.</text>
</comment>
<comment type="subunit">
    <text evidence="1">Interacts with UvrB in an incision complex.</text>
</comment>
<comment type="subcellular location">
    <subcellularLocation>
        <location evidence="1">Cytoplasm</location>
    </subcellularLocation>
</comment>
<comment type="similarity">
    <text evidence="1">Belongs to the UvrC family.</text>
</comment>